<organism evidence="11">
    <name type="scientific">Echis ocellatus</name>
    <name type="common">Ocellated saw-scaled viper</name>
    <dbReference type="NCBI Taxonomy" id="99586"/>
    <lineage>
        <taxon>Eukaryota</taxon>
        <taxon>Metazoa</taxon>
        <taxon>Chordata</taxon>
        <taxon>Craniata</taxon>
        <taxon>Vertebrata</taxon>
        <taxon>Euteleostomi</taxon>
        <taxon>Lepidosauria</taxon>
        <taxon>Squamata</taxon>
        <taxon>Bifurcata</taxon>
        <taxon>Unidentata</taxon>
        <taxon>Episquamata</taxon>
        <taxon>Toxicofera</taxon>
        <taxon>Serpentes</taxon>
        <taxon>Colubroidea</taxon>
        <taxon>Viperidae</taxon>
        <taxon>Viperinae</taxon>
        <taxon>Echis</taxon>
    </lineage>
</organism>
<comment type="function">
    <text evidence="7 10">Renin is a highly specific endopeptidase, whose only known function is to generate angiotensin I from angiotensinogen in the plasma, initiating a cascade of reactions that produce an elevation of blood pressure and increased sodium retention by the kidney (Probable). This protein is also found in snake venom and shown to specifically cleave human and porcine angiotensinogen into angiotensin I. It does not have general protease activity, no cleavage of alpha or beta casein. May be directly responsible for elevation of blood pressure in the victims of envenomation (PubMed:28734982).</text>
</comment>
<comment type="catalytic activity">
    <reaction evidence="7">
        <text>Cleavage of Leu-|-Xaa bond in angiotensinogen to generate angiotensin I.</text>
        <dbReference type="EC" id="3.4.23.15"/>
    </reaction>
</comment>
<comment type="activity regulation">
    <text evidence="7">Inhibited completely by aspartyl protease inhibitor pepstatin A, but not by the serine- or metalloproteinase inhibitors PMSF or EDTA.</text>
</comment>
<comment type="subcellular location">
    <subcellularLocation>
        <location evidence="7">Secreted</location>
    </subcellularLocation>
</comment>
<comment type="tissue specificity">
    <text evidence="7">Expressed by the venom gland (at protein level).</text>
</comment>
<comment type="PTM">
    <text evidence="7">N-glycosylated.</text>
</comment>
<comment type="similarity">
    <text evidence="6">Belongs to the peptidase A1 family.</text>
</comment>
<keyword id="KW-0064">Aspartyl protease</keyword>
<keyword id="KW-0903">Direct protein sequencing</keyword>
<keyword id="KW-1015">Disulfide bond</keyword>
<keyword id="KW-0325">Glycoprotein</keyword>
<keyword id="KW-0378">Hydrolase</keyword>
<keyword id="KW-0645">Protease</keyword>
<keyword id="KW-0964">Secreted</keyword>
<keyword id="KW-0732">Signal</keyword>
<keyword id="KW-0865">Zymogen</keyword>
<dbReference type="EC" id="3.4.23.15" evidence="7"/>
<dbReference type="EMBL" id="AM180266">
    <property type="protein sequence ID" value="CAJ55261.1"/>
    <property type="molecule type" value="mRNA"/>
</dbReference>
<dbReference type="SMR" id="Q18DC8"/>
<dbReference type="MEROPS" id="A01.007"/>
<dbReference type="GO" id="GO:0005615">
    <property type="term" value="C:extracellular space"/>
    <property type="evidence" value="ECO:0000314"/>
    <property type="project" value="UniProtKB"/>
</dbReference>
<dbReference type="GO" id="GO:0004190">
    <property type="term" value="F:aspartic-type endopeptidase activity"/>
    <property type="evidence" value="ECO:0000314"/>
    <property type="project" value="UniProtKB"/>
</dbReference>
<dbReference type="GO" id="GO:0002003">
    <property type="term" value="P:angiotensin maturation"/>
    <property type="evidence" value="ECO:0007669"/>
    <property type="project" value="TreeGrafter"/>
</dbReference>
<dbReference type="GO" id="GO:0035814">
    <property type="term" value="P:negative regulation of renal sodium excretion"/>
    <property type="evidence" value="ECO:0000305"/>
    <property type="project" value="UniProtKB"/>
</dbReference>
<dbReference type="GO" id="GO:1905656">
    <property type="term" value="P:positive regulation of artery smooth muscle contraction"/>
    <property type="evidence" value="ECO:0000305"/>
    <property type="project" value="UniProtKB"/>
</dbReference>
<dbReference type="GO" id="GO:0045777">
    <property type="term" value="P:positive regulation of blood pressure"/>
    <property type="evidence" value="ECO:0000305"/>
    <property type="project" value="UniProtKB"/>
</dbReference>
<dbReference type="GO" id="GO:0045907">
    <property type="term" value="P:positive regulation of vasoconstriction"/>
    <property type="evidence" value="ECO:0000305"/>
    <property type="project" value="UniProtKB"/>
</dbReference>
<dbReference type="GO" id="GO:0006508">
    <property type="term" value="P:proteolysis"/>
    <property type="evidence" value="ECO:0000314"/>
    <property type="project" value="UniProtKB"/>
</dbReference>
<dbReference type="CDD" id="cd05487">
    <property type="entry name" value="renin_like"/>
    <property type="match status" value="1"/>
</dbReference>
<dbReference type="FunFam" id="2.40.70.10:FF:000032">
    <property type="entry name" value="renin"/>
    <property type="match status" value="1"/>
</dbReference>
<dbReference type="FunFam" id="2.40.70.10:FF:000002">
    <property type="entry name" value="Vacuolar aspartic proteinase"/>
    <property type="match status" value="1"/>
</dbReference>
<dbReference type="Gene3D" id="2.40.70.10">
    <property type="entry name" value="Acid Proteases"/>
    <property type="match status" value="2"/>
</dbReference>
<dbReference type="InterPro" id="IPR001461">
    <property type="entry name" value="Aspartic_peptidase_A1"/>
</dbReference>
<dbReference type="InterPro" id="IPR001969">
    <property type="entry name" value="Aspartic_peptidase_AS"/>
</dbReference>
<dbReference type="InterPro" id="IPR012848">
    <property type="entry name" value="Aspartic_peptidase_N"/>
</dbReference>
<dbReference type="InterPro" id="IPR033121">
    <property type="entry name" value="PEPTIDASE_A1"/>
</dbReference>
<dbReference type="InterPro" id="IPR021109">
    <property type="entry name" value="Peptidase_aspartic_dom_sf"/>
</dbReference>
<dbReference type="InterPro" id="IPR034135">
    <property type="entry name" value="Renin-like_dom"/>
</dbReference>
<dbReference type="PANTHER" id="PTHR47966">
    <property type="entry name" value="BETA-SITE APP-CLEAVING ENZYME, ISOFORM A-RELATED"/>
    <property type="match status" value="1"/>
</dbReference>
<dbReference type="PANTHER" id="PTHR47966:SF24">
    <property type="entry name" value="RENIN"/>
    <property type="match status" value="1"/>
</dbReference>
<dbReference type="Pfam" id="PF07966">
    <property type="entry name" value="A1_Propeptide"/>
    <property type="match status" value="1"/>
</dbReference>
<dbReference type="Pfam" id="PF00026">
    <property type="entry name" value="Asp"/>
    <property type="match status" value="1"/>
</dbReference>
<dbReference type="PRINTS" id="PR00792">
    <property type="entry name" value="PEPSIN"/>
</dbReference>
<dbReference type="SUPFAM" id="SSF50630">
    <property type="entry name" value="Acid proteases"/>
    <property type="match status" value="1"/>
</dbReference>
<dbReference type="PROSITE" id="PS00141">
    <property type="entry name" value="ASP_PROTEASE"/>
    <property type="match status" value="2"/>
</dbReference>
<dbReference type="PROSITE" id="PS51767">
    <property type="entry name" value="PEPTIDASE_A1"/>
    <property type="match status" value="1"/>
</dbReference>
<gene>
    <name evidence="11" type="primary">Asp-Eoc123</name>
</gene>
<accession>Q18DC8</accession>
<feature type="signal peptide" evidence="2">
    <location>
        <begin position="1"/>
        <end position="21"/>
    </location>
</feature>
<feature type="propeptide" id="PRO_0000456883" description="Activation peptide" evidence="2 10">
    <location>
        <begin position="22"/>
        <end position="43"/>
    </location>
</feature>
<feature type="chain" id="PRO_5004187127" description="Renin" evidence="2 10">
    <location>
        <begin position="44"/>
        <end position="395"/>
    </location>
</feature>
<feature type="domain" description="Peptidase A1" evidence="4">
    <location>
        <begin position="79"/>
        <end position="392"/>
    </location>
</feature>
<feature type="active site" evidence="1 5">
    <location>
        <position position="97"/>
    </location>
</feature>
<feature type="active site" evidence="1 5">
    <location>
        <position position="283"/>
    </location>
</feature>
<feature type="glycosylation site" description="N-linked (GlcNAc...) asparagine" evidence="3">
    <location>
        <position position="64"/>
    </location>
</feature>
<feature type="disulfide bond" evidence="1">
    <location>
        <begin position="110"/>
        <end position="117"/>
    </location>
</feature>
<feature type="disulfide bond" evidence="1">
    <location>
        <begin position="274"/>
        <end position="278"/>
    </location>
</feature>
<feature type="disulfide bond" evidence="1 4">
    <location>
        <begin position="316"/>
        <end position="351"/>
    </location>
</feature>
<name>RE123_ECHOC</name>
<sequence length="395" mass="43829">MLQSWEFVLLISCFLCFSSDALQRISLKKMPSIRETLQEMGMKVADVLPSLKHRFSYLDEGLHNKTASTILTNFRDTQYYGEISIGTPAQIFKVVFDTGSSNLWVPSHQCSPLYSACVSHNRYDSSESSTYKPKGTKITLTYGQGYIEGFLSQDIVRVADIPITQFFTEAIALPSIPFMYAHFDGVLGMGYPKQAIGGVIPVFDNIMSEKVLSENVFSVYYSRHSESNTGGEIILGGSDPSHYTGDFHYVSTSREGYWHVDLKGVSIENKIALCHDGCTATIDTGTSFISGPASSISVLMETIGATLSRGDYVIDCNQINLLPDISFHLGDMTYSLSSSTYVLKYSDETECTVAFSAIDIPPPRGPLWLLGATFIKQYYIEFDRQNNRIGFATSF</sequence>
<reference evidence="11" key="1">
    <citation type="journal article" date="2006" name="Gene">
        <title>Venom gland EST analysis of the saw-scaled viper, Echis ocellatus, reveals novel alpha9beta1 integrin-binding motifs in venom metalloproteinases and a new group of putative toxins, renin-like aspartic proteases.</title>
        <authorList>
            <person name="Wagstaff S.C."/>
            <person name="Harrison R.A."/>
        </authorList>
    </citation>
    <scope>NUCLEOTIDE SEQUENCE [MRNA]</scope>
    <source>
        <tissue evidence="11">Venom gland</tissue>
    </source>
</reference>
<reference key="2">
    <citation type="journal article" date="2017" name="Toxicon">
        <title>Isolation and characterization of renin-like aspartic-proteases from Echis ocellatus venom.</title>
        <authorList>
            <person name="Wilkinson M.C."/>
            <person name="Nightingale D.J.H."/>
            <person name="Harrison R.A."/>
            <person name="Wagstaff S.C."/>
        </authorList>
    </citation>
    <scope>PROTEIN SEQUENCE OF 76-93; 94-122; 138-157; 194-210; 211-223; 224-254 AND 365-376</scope>
    <scope>FUNCTION</scope>
    <scope>CATALYTIC ACTIVITY</scope>
    <scope>ACTIVITY REGULATION</scope>
    <scope>SUBCELLULAR LOCATION</scope>
    <scope>TISSUE SPECIFICITY</scope>
    <scope>GLYCOSYLATION</scope>
    <source>
        <tissue evidence="9">Venom</tissue>
    </source>
</reference>
<evidence type="ECO:0000250" key="1">
    <source>
        <dbReference type="UniProtKB" id="P00797"/>
    </source>
</evidence>
<evidence type="ECO:0000255" key="2"/>
<evidence type="ECO:0000255" key="3">
    <source>
        <dbReference type="PROSITE-ProRule" id="PRU00498"/>
    </source>
</evidence>
<evidence type="ECO:0000255" key="4">
    <source>
        <dbReference type="PROSITE-ProRule" id="PRU01103"/>
    </source>
</evidence>
<evidence type="ECO:0000255" key="5">
    <source>
        <dbReference type="PROSITE-ProRule" id="PRU10094"/>
    </source>
</evidence>
<evidence type="ECO:0000255" key="6">
    <source>
        <dbReference type="RuleBase" id="RU000454"/>
    </source>
</evidence>
<evidence type="ECO:0000269" key="7">
    <source>
    </source>
</evidence>
<evidence type="ECO:0000303" key="8">
    <source>
    </source>
</evidence>
<evidence type="ECO:0000303" key="9">
    <source>
    </source>
</evidence>
<evidence type="ECO:0000305" key="10"/>
<evidence type="ECO:0000312" key="11">
    <source>
        <dbReference type="EMBL" id="CAJ55261.1"/>
    </source>
</evidence>
<protein>
    <recommendedName>
        <fullName evidence="10">Renin</fullName>
        <ecNumber evidence="7">3.4.23.15</ecNumber>
    </recommendedName>
    <alternativeName>
        <fullName evidence="10">Angiotensinogenase</fullName>
    </alternativeName>
    <alternativeName>
        <fullName evidence="8 9">Renin-like aspartic protease EOC123</fullName>
    </alternativeName>
    <alternativeName>
        <fullName evidence="9">SVAP EOC123</fullName>
    </alternativeName>
    <alternativeName>
        <fullName evidence="9">Snake venom aspartic protease EOC123</fullName>
    </alternativeName>
</protein>
<proteinExistence type="evidence at protein level"/>